<comment type="function">
    <text evidence="1 2">Catalyzes the synthesis of beta-nicotinate D-ribonucleotide from nicotinate and 5-phospho-D-ribose 1-phosphate at the expense of ATP.</text>
</comment>
<comment type="catalytic activity">
    <reaction evidence="1 2">
        <text>nicotinate + 5-phospho-alpha-D-ribose 1-diphosphate + ATP + H2O = nicotinate beta-D-ribonucleotide + ADP + phosphate + diphosphate</text>
        <dbReference type="Rhea" id="RHEA:36163"/>
        <dbReference type="ChEBI" id="CHEBI:15377"/>
        <dbReference type="ChEBI" id="CHEBI:30616"/>
        <dbReference type="ChEBI" id="CHEBI:32544"/>
        <dbReference type="ChEBI" id="CHEBI:33019"/>
        <dbReference type="ChEBI" id="CHEBI:43474"/>
        <dbReference type="ChEBI" id="CHEBI:57502"/>
        <dbReference type="ChEBI" id="CHEBI:58017"/>
        <dbReference type="ChEBI" id="CHEBI:456216"/>
        <dbReference type="EC" id="6.3.4.21"/>
    </reaction>
</comment>
<comment type="pathway">
    <text evidence="1">Cofactor biosynthesis; NAD(+) biosynthesis; nicotinate D-ribonucleotide from nicotinate: step 1/1.</text>
</comment>
<comment type="PTM">
    <text evidence="1">Transiently phosphorylated on a His residue during the reaction cycle. Phosphorylation strongly increases the affinity for substrates and increases the rate of nicotinate D-ribonucleotide production. Dephosphorylation regenerates the low-affinity form of the enzyme, leading to product release.</text>
</comment>
<comment type="similarity">
    <text evidence="1">Belongs to the NAPRTase family.</text>
</comment>
<feature type="initiator methionine" description="Removed" evidence="2">
    <location>
        <position position="1"/>
    </location>
</feature>
<feature type="chain" id="PRO_0000205828" description="Nicotinate phosphoribosyltransferase">
    <location>
        <begin position="2"/>
        <end position="400"/>
    </location>
</feature>
<feature type="modified residue" description="Phosphohistidine; by autocatalysis" evidence="1">
    <location>
        <position position="220"/>
    </location>
</feature>
<keyword id="KW-0903">Direct protein sequencing</keyword>
<keyword id="KW-0436">Ligase</keyword>
<keyword id="KW-0597">Phosphoprotein</keyword>
<keyword id="KW-0662">Pyridine nucleotide biosynthesis</keyword>
<keyword id="KW-1185">Reference proteome</keyword>
<organism>
    <name type="scientific">Escherichia coli (strain K12)</name>
    <dbReference type="NCBI Taxonomy" id="83333"/>
    <lineage>
        <taxon>Bacteria</taxon>
        <taxon>Pseudomonadati</taxon>
        <taxon>Pseudomonadota</taxon>
        <taxon>Gammaproteobacteria</taxon>
        <taxon>Enterobacterales</taxon>
        <taxon>Enterobacteriaceae</taxon>
        <taxon>Escherichia</taxon>
    </lineage>
</organism>
<sequence>MTQFASPVLHSLLDTDAYKLHMQQAVFHHYYDVHVAAEFRCRGDDLLGIYADAIREQVQAMQHLRLQDDEYQWLSALPFFKADYLNWLREFRFNPEQVTVSNDNGKLDIRLSGPWREVILWEVPLLAVISEMVHRYRSPQADVAQALDTLESKLVDFSALTAGLDMSRFHLMDFGTRRRFSREVQETIVKRLQQESWFVGTSNYDLARRLSLTPMGTQAHEWFQAHQQISPDLANSQRAALAAWLEEYPDQLGIALTDCITMDAFLRDFGVEFASRYQGLRHDSGDPVEWGEKAIAHYEKLGIDPQSKTLVFSDNLDLRKAVELYRHFSSRVQLSFGIGTRLTCDIPQVKPLNIVIKLVECNGKPVAKLSDSPGKTICHDKAFVRALRKAFDLPHIKKAS</sequence>
<evidence type="ECO:0000255" key="1">
    <source>
        <dbReference type="HAMAP-Rule" id="MF_00570"/>
    </source>
</evidence>
<evidence type="ECO:0000269" key="2">
    <source>
    </source>
</evidence>
<dbReference type="EC" id="6.3.4.21" evidence="1"/>
<dbReference type="EMBL" id="J05568">
    <property type="protein sequence ID" value="AAA24400.1"/>
    <property type="molecule type" value="Genomic_DNA"/>
</dbReference>
<dbReference type="EMBL" id="U00096">
    <property type="protein sequence ID" value="AAC74017.1"/>
    <property type="molecule type" value="Genomic_DNA"/>
</dbReference>
<dbReference type="EMBL" id="AP009048">
    <property type="protein sequence ID" value="BAA35683.1"/>
    <property type="molecule type" value="Genomic_DNA"/>
</dbReference>
<dbReference type="PIR" id="JQ0756">
    <property type="entry name" value="JQ0756"/>
</dbReference>
<dbReference type="RefSeq" id="NP_415451.1">
    <property type="nucleotide sequence ID" value="NC_000913.3"/>
</dbReference>
<dbReference type="RefSeq" id="WP_001307697.1">
    <property type="nucleotide sequence ID" value="NZ_SSZK01000002.1"/>
</dbReference>
<dbReference type="SMR" id="P18133"/>
<dbReference type="BioGRID" id="4261881">
    <property type="interactions" value="23"/>
</dbReference>
<dbReference type="BioGRID" id="850992">
    <property type="interactions" value="1"/>
</dbReference>
<dbReference type="DIP" id="DIP-10521N"/>
<dbReference type="FunCoup" id="P18133">
    <property type="interactions" value="478"/>
</dbReference>
<dbReference type="IntAct" id="P18133">
    <property type="interactions" value="19"/>
</dbReference>
<dbReference type="STRING" id="511145.b0931"/>
<dbReference type="jPOST" id="P18133"/>
<dbReference type="PaxDb" id="511145-b0931"/>
<dbReference type="EnsemblBacteria" id="AAC74017">
    <property type="protein sequence ID" value="AAC74017"/>
    <property type="gene ID" value="b0931"/>
</dbReference>
<dbReference type="GeneID" id="75171005"/>
<dbReference type="GeneID" id="946648"/>
<dbReference type="KEGG" id="ecj:JW0914"/>
<dbReference type="KEGG" id="eco:b0931"/>
<dbReference type="KEGG" id="ecoc:C3026_05720"/>
<dbReference type="PATRIC" id="fig|1411691.4.peg.1344"/>
<dbReference type="EchoBASE" id="EB0735"/>
<dbReference type="eggNOG" id="COG1488">
    <property type="taxonomic scope" value="Bacteria"/>
</dbReference>
<dbReference type="HOGENOM" id="CLU_030991_1_0_6"/>
<dbReference type="InParanoid" id="P18133"/>
<dbReference type="OMA" id="IEHCLEY"/>
<dbReference type="OrthoDB" id="9771406at2"/>
<dbReference type="PhylomeDB" id="P18133"/>
<dbReference type="BioCyc" id="EcoCyc:NICOTINATEPRIBOSYLTRANS-MONOMER"/>
<dbReference type="BioCyc" id="MetaCyc:NICOTINATEPRIBOSYLTRANS-MONOMER"/>
<dbReference type="BRENDA" id="6.3.4.21">
    <property type="organism ID" value="2026"/>
</dbReference>
<dbReference type="UniPathway" id="UPA00253">
    <property type="reaction ID" value="UER00457"/>
</dbReference>
<dbReference type="PRO" id="PR:P18133"/>
<dbReference type="Proteomes" id="UP000000625">
    <property type="component" value="Chromosome"/>
</dbReference>
<dbReference type="GO" id="GO:0005829">
    <property type="term" value="C:cytosol"/>
    <property type="evidence" value="ECO:0000314"/>
    <property type="project" value="EcoCyc"/>
</dbReference>
<dbReference type="GO" id="GO:0016879">
    <property type="term" value="F:ligase activity, forming carbon-nitrogen bonds"/>
    <property type="evidence" value="ECO:0000314"/>
    <property type="project" value="UniProtKB"/>
</dbReference>
<dbReference type="GO" id="GO:0004516">
    <property type="term" value="F:nicotinate phosphoribosyltransferase activity"/>
    <property type="evidence" value="ECO:0000314"/>
    <property type="project" value="EcoCyc"/>
</dbReference>
<dbReference type="GO" id="GO:0009435">
    <property type="term" value="P:NAD biosynthetic process"/>
    <property type="evidence" value="ECO:0000314"/>
    <property type="project" value="UniProtKB"/>
</dbReference>
<dbReference type="GO" id="GO:0034355">
    <property type="term" value="P:NAD biosynthetic process via the salvage pathway"/>
    <property type="evidence" value="ECO:0000318"/>
    <property type="project" value="GO_Central"/>
</dbReference>
<dbReference type="GO" id="GO:0009408">
    <property type="term" value="P:response to heat"/>
    <property type="evidence" value="ECO:0000315"/>
    <property type="project" value="EcoCyc"/>
</dbReference>
<dbReference type="CDD" id="cd01401">
    <property type="entry name" value="PncB_like"/>
    <property type="match status" value="1"/>
</dbReference>
<dbReference type="FunFam" id="3.20.140.10:FF:000001">
    <property type="entry name" value="Nicotinate phosphoribosyltransferase"/>
    <property type="match status" value="1"/>
</dbReference>
<dbReference type="Gene3D" id="3.20.140.10">
    <property type="entry name" value="nicotinate phosphoribosyltransferase"/>
    <property type="match status" value="1"/>
</dbReference>
<dbReference type="HAMAP" id="MF_00570">
    <property type="entry name" value="NAPRTase"/>
    <property type="match status" value="1"/>
</dbReference>
<dbReference type="InterPro" id="IPR041525">
    <property type="entry name" value="N/Namide_PRibTrfase"/>
</dbReference>
<dbReference type="InterPro" id="IPR040727">
    <property type="entry name" value="NAPRTase_N"/>
</dbReference>
<dbReference type="InterPro" id="IPR006406">
    <property type="entry name" value="Nic_PRibTrfase"/>
</dbReference>
<dbReference type="InterPro" id="IPR007229">
    <property type="entry name" value="Nic_PRibTrfase-Fam"/>
</dbReference>
<dbReference type="InterPro" id="IPR036068">
    <property type="entry name" value="Nicotinate_pribotase-like_C"/>
</dbReference>
<dbReference type="NCBIfam" id="TIGR01514">
    <property type="entry name" value="NAPRTase"/>
    <property type="match status" value="1"/>
</dbReference>
<dbReference type="NCBIfam" id="NF003704">
    <property type="entry name" value="PRK05321.1"/>
    <property type="match status" value="1"/>
</dbReference>
<dbReference type="PANTHER" id="PTHR11098">
    <property type="entry name" value="NICOTINATE PHOSPHORIBOSYLTRANSFERASE"/>
    <property type="match status" value="1"/>
</dbReference>
<dbReference type="PANTHER" id="PTHR11098:SF1">
    <property type="entry name" value="NICOTINATE PHOSPHORIBOSYLTRANSFERASE"/>
    <property type="match status" value="1"/>
</dbReference>
<dbReference type="Pfam" id="PF04095">
    <property type="entry name" value="NAPRTase"/>
    <property type="match status" value="1"/>
</dbReference>
<dbReference type="Pfam" id="PF17767">
    <property type="entry name" value="NAPRTase_N"/>
    <property type="match status" value="1"/>
</dbReference>
<dbReference type="PIRSF" id="PIRSF000484">
    <property type="entry name" value="NAPRT"/>
    <property type="match status" value="1"/>
</dbReference>
<dbReference type="SUPFAM" id="SSF51690">
    <property type="entry name" value="Nicotinate/Quinolinate PRTase C-terminal domain-like"/>
    <property type="match status" value="1"/>
</dbReference>
<dbReference type="SUPFAM" id="SSF54675">
    <property type="entry name" value="Nicotinate/Quinolinate PRTase N-terminal domain-like"/>
    <property type="match status" value="1"/>
</dbReference>
<gene>
    <name evidence="1" type="primary">pncB</name>
    <name type="ordered locus">b0931</name>
    <name type="ordered locus">JW0914</name>
</gene>
<name>PNCB_ECOLI</name>
<accession>P18133</accession>
<reference key="1">
    <citation type="journal article" date="1990" name="J. Biol. Chem.">
        <title>Variation of cofactor levels in Escherichia coli. Sequence analysis and expression of the pncB gene encoding nicotinic acid phosphoribosyltransferase.</title>
        <authorList>
            <person name="Wubbolts M.G."/>
            <person name="Terpstra P."/>
            <person name="van Beilen J.B."/>
            <person name="Kingma J."/>
            <person name="Meesters H.A.R."/>
            <person name="Witholt B."/>
        </authorList>
    </citation>
    <scope>NUCLEOTIDE SEQUENCE [GENOMIC DNA]</scope>
    <scope>PROTEIN SEQUENCE OF 2-21</scope>
    <scope>FUNCTION</scope>
    <scope>CATALYTIC ACTIVITY</scope>
    <source>
        <strain>GEC70</strain>
    </source>
</reference>
<reference key="2">
    <citation type="journal article" date="1996" name="DNA Res.">
        <title>A 718-kb DNA sequence of the Escherichia coli K-12 genome corresponding to the 12.7-28.0 min region on the linkage map.</title>
        <authorList>
            <person name="Oshima T."/>
            <person name="Aiba H."/>
            <person name="Baba T."/>
            <person name="Fujita K."/>
            <person name="Hayashi K."/>
            <person name="Honjo A."/>
            <person name="Ikemoto K."/>
            <person name="Inada T."/>
            <person name="Itoh T."/>
            <person name="Kajihara M."/>
            <person name="Kanai K."/>
            <person name="Kashimoto K."/>
            <person name="Kimura S."/>
            <person name="Kitagawa M."/>
            <person name="Makino K."/>
            <person name="Masuda S."/>
            <person name="Miki T."/>
            <person name="Mizobuchi K."/>
            <person name="Mori H."/>
            <person name="Motomura K."/>
            <person name="Nakamura Y."/>
            <person name="Nashimoto H."/>
            <person name="Nishio Y."/>
            <person name="Saito N."/>
            <person name="Sampei G."/>
            <person name="Seki Y."/>
            <person name="Tagami H."/>
            <person name="Takemoto K."/>
            <person name="Wada C."/>
            <person name="Yamamoto Y."/>
            <person name="Yano M."/>
            <person name="Horiuchi T."/>
        </authorList>
    </citation>
    <scope>NUCLEOTIDE SEQUENCE [LARGE SCALE GENOMIC DNA]</scope>
    <source>
        <strain>K12 / W3110 / ATCC 27325 / DSM 5911</strain>
    </source>
</reference>
<reference key="3">
    <citation type="journal article" date="1997" name="Science">
        <title>The complete genome sequence of Escherichia coli K-12.</title>
        <authorList>
            <person name="Blattner F.R."/>
            <person name="Plunkett G. III"/>
            <person name="Bloch C.A."/>
            <person name="Perna N.T."/>
            <person name="Burland V."/>
            <person name="Riley M."/>
            <person name="Collado-Vides J."/>
            <person name="Glasner J.D."/>
            <person name="Rode C.K."/>
            <person name="Mayhew G.F."/>
            <person name="Gregor J."/>
            <person name="Davis N.W."/>
            <person name="Kirkpatrick H.A."/>
            <person name="Goeden M.A."/>
            <person name="Rose D.J."/>
            <person name="Mau B."/>
            <person name="Shao Y."/>
        </authorList>
    </citation>
    <scope>NUCLEOTIDE SEQUENCE [LARGE SCALE GENOMIC DNA]</scope>
    <source>
        <strain>K12 / MG1655 / ATCC 47076</strain>
    </source>
</reference>
<reference key="4">
    <citation type="journal article" date="2006" name="Mol. Syst. Biol.">
        <title>Highly accurate genome sequences of Escherichia coli K-12 strains MG1655 and W3110.</title>
        <authorList>
            <person name="Hayashi K."/>
            <person name="Morooka N."/>
            <person name="Yamamoto Y."/>
            <person name="Fujita K."/>
            <person name="Isono K."/>
            <person name="Choi S."/>
            <person name="Ohtsubo E."/>
            <person name="Baba T."/>
            <person name="Wanner B.L."/>
            <person name="Mori H."/>
            <person name="Horiuchi T."/>
        </authorList>
    </citation>
    <scope>NUCLEOTIDE SEQUENCE [LARGE SCALE GENOMIC DNA]</scope>
    <source>
        <strain>K12 / W3110 / ATCC 27325 / DSM 5911</strain>
    </source>
</reference>
<protein>
    <recommendedName>
        <fullName evidence="1">Nicotinate phosphoribosyltransferase</fullName>
        <shortName evidence="1">NAPRTase</shortName>
        <ecNumber evidence="1">6.3.4.21</ecNumber>
    </recommendedName>
</protein>
<proteinExistence type="evidence at protein level"/>